<name>CLPX_YERPS</name>
<organism>
    <name type="scientific">Yersinia pseudotuberculosis serotype I (strain IP32953)</name>
    <dbReference type="NCBI Taxonomy" id="273123"/>
    <lineage>
        <taxon>Bacteria</taxon>
        <taxon>Pseudomonadati</taxon>
        <taxon>Pseudomonadota</taxon>
        <taxon>Gammaproteobacteria</taxon>
        <taxon>Enterobacterales</taxon>
        <taxon>Yersiniaceae</taxon>
        <taxon>Yersinia</taxon>
    </lineage>
</organism>
<accession>Q66DT3</accession>
<comment type="function">
    <text evidence="1">ATP-dependent specificity component of the Clp protease. It directs the protease to specific substrates. Can perform chaperone functions in the absence of ClpP.</text>
</comment>
<comment type="subunit">
    <text evidence="1">Component of the ClpX-ClpP complex. Forms a hexameric ring that, in the presence of ATP, binds to fourteen ClpP subunits assembled into a disk-like structure with a central cavity, resembling the structure of eukaryotic proteasomes.</text>
</comment>
<comment type="similarity">
    <text evidence="1">Belongs to the ClpX chaperone family.</text>
</comment>
<protein>
    <recommendedName>
        <fullName evidence="1">ATP-dependent Clp protease ATP-binding subunit ClpX</fullName>
    </recommendedName>
</protein>
<keyword id="KW-0067">ATP-binding</keyword>
<keyword id="KW-0143">Chaperone</keyword>
<keyword id="KW-0479">Metal-binding</keyword>
<keyword id="KW-0547">Nucleotide-binding</keyword>
<keyword id="KW-0862">Zinc</keyword>
<gene>
    <name evidence="1" type="primary">clpX</name>
    <name type="ordered locus">YPTB0960</name>
</gene>
<dbReference type="EMBL" id="BX936398">
    <property type="protein sequence ID" value="CAH20200.1"/>
    <property type="molecule type" value="Genomic_DNA"/>
</dbReference>
<dbReference type="RefSeq" id="WP_011191865.1">
    <property type="nucleotide sequence ID" value="NC_006155.1"/>
</dbReference>
<dbReference type="SMR" id="Q66DT3"/>
<dbReference type="KEGG" id="ypo:BZ17_1587"/>
<dbReference type="KEGG" id="yps:YPTB0960"/>
<dbReference type="PATRIC" id="fig|273123.14.peg.1684"/>
<dbReference type="Proteomes" id="UP000001011">
    <property type="component" value="Chromosome"/>
</dbReference>
<dbReference type="GO" id="GO:0009376">
    <property type="term" value="C:HslUV protease complex"/>
    <property type="evidence" value="ECO:0007669"/>
    <property type="project" value="TreeGrafter"/>
</dbReference>
<dbReference type="GO" id="GO:0005524">
    <property type="term" value="F:ATP binding"/>
    <property type="evidence" value="ECO:0007669"/>
    <property type="project" value="UniProtKB-UniRule"/>
</dbReference>
<dbReference type="GO" id="GO:0016887">
    <property type="term" value="F:ATP hydrolysis activity"/>
    <property type="evidence" value="ECO:0007669"/>
    <property type="project" value="InterPro"/>
</dbReference>
<dbReference type="GO" id="GO:0140662">
    <property type="term" value="F:ATP-dependent protein folding chaperone"/>
    <property type="evidence" value="ECO:0007669"/>
    <property type="project" value="InterPro"/>
</dbReference>
<dbReference type="GO" id="GO:0046983">
    <property type="term" value="F:protein dimerization activity"/>
    <property type="evidence" value="ECO:0007669"/>
    <property type="project" value="InterPro"/>
</dbReference>
<dbReference type="GO" id="GO:0051082">
    <property type="term" value="F:unfolded protein binding"/>
    <property type="evidence" value="ECO:0007669"/>
    <property type="project" value="UniProtKB-UniRule"/>
</dbReference>
<dbReference type="GO" id="GO:0008270">
    <property type="term" value="F:zinc ion binding"/>
    <property type="evidence" value="ECO:0007669"/>
    <property type="project" value="InterPro"/>
</dbReference>
<dbReference type="GO" id="GO:0051301">
    <property type="term" value="P:cell division"/>
    <property type="evidence" value="ECO:0007669"/>
    <property type="project" value="TreeGrafter"/>
</dbReference>
<dbReference type="GO" id="GO:0051603">
    <property type="term" value="P:proteolysis involved in protein catabolic process"/>
    <property type="evidence" value="ECO:0007669"/>
    <property type="project" value="TreeGrafter"/>
</dbReference>
<dbReference type="CDD" id="cd19497">
    <property type="entry name" value="RecA-like_ClpX"/>
    <property type="match status" value="1"/>
</dbReference>
<dbReference type="FunFam" id="1.10.8.60:FF:000002">
    <property type="entry name" value="ATP-dependent Clp protease ATP-binding subunit ClpX"/>
    <property type="match status" value="1"/>
</dbReference>
<dbReference type="FunFam" id="3.40.50.300:FF:000005">
    <property type="entry name" value="ATP-dependent Clp protease ATP-binding subunit ClpX"/>
    <property type="match status" value="1"/>
</dbReference>
<dbReference type="Gene3D" id="1.10.8.60">
    <property type="match status" value="1"/>
</dbReference>
<dbReference type="Gene3D" id="6.20.220.10">
    <property type="entry name" value="ClpX chaperone, C4-type zinc finger domain"/>
    <property type="match status" value="1"/>
</dbReference>
<dbReference type="Gene3D" id="3.40.50.300">
    <property type="entry name" value="P-loop containing nucleotide triphosphate hydrolases"/>
    <property type="match status" value="1"/>
</dbReference>
<dbReference type="HAMAP" id="MF_00175">
    <property type="entry name" value="ClpX"/>
    <property type="match status" value="1"/>
</dbReference>
<dbReference type="InterPro" id="IPR003593">
    <property type="entry name" value="AAA+_ATPase"/>
</dbReference>
<dbReference type="InterPro" id="IPR050052">
    <property type="entry name" value="ATP-dep_Clp_protease_ClpX"/>
</dbReference>
<dbReference type="InterPro" id="IPR003959">
    <property type="entry name" value="ATPase_AAA_core"/>
</dbReference>
<dbReference type="InterPro" id="IPR019489">
    <property type="entry name" value="Clp_ATPase_C"/>
</dbReference>
<dbReference type="InterPro" id="IPR004487">
    <property type="entry name" value="Clp_protease_ATP-bd_su_ClpX"/>
</dbReference>
<dbReference type="InterPro" id="IPR046425">
    <property type="entry name" value="ClpX_bact"/>
</dbReference>
<dbReference type="InterPro" id="IPR027417">
    <property type="entry name" value="P-loop_NTPase"/>
</dbReference>
<dbReference type="InterPro" id="IPR010603">
    <property type="entry name" value="Znf_CppX_C4"/>
</dbReference>
<dbReference type="InterPro" id="IPR038366">
    <property type="entry name" value="Znf_CppX_C4_sf"/>
</dbReference>
<dbReference type="NCBIfam" id="TIGR00382">
    <property type="entry name" value="clpX"/>
    <property type="match status" value="1"/>
</dbReference>
<dbReference type="NCBIfam" id="NF003745">
    <property type="entry name" value="PRK05342.1"/>
    <property type="match status" value="1"/>
</dbReference>
<dbReference type="PANTHER" id="PTHR48102:SF7">
    <property type="entry name" value="ATP-DEPENDENT CLP PROTEASE ATP-BINDING SUBUNIT CLPX-LIKE, MITOCHONDRIAL"/>
    <property type="match status" value="1"/>
</dbReference>
<dbReference type="PANTHER" id="PTHR48102">
    <property type="entry name" value="ATP-DEPENDENT CLP PROTEASE ATP-BINDING SUBUNIT CLPX-LIKE, MITOCHONDRIAL-RELATED"/>
    <property type="match status" value="1"/>
</dbReference>
<dbReference type="Pfam" id="PF07724">
    <property type="entry name" value="AAA_2"/>
    <property type="match status" value="1"/>
</dbReference>
<dbReference type="Pfam" id="PF10431">
    <property type="entry name" value="ClpB_D2-small"/>
    <property type="match status" value="1"/>
</dbReference>
<dbReference type="Pfam" id="PF06689">
    <property type="entry name" value="zf-C4_ClpX"/>
    <property type="match status" value="1"/>
</dbReference>
<dbReference type="SMART" id="SM00382">
    <property type="entry name" value="AAA"/>
    <property type="match status" value="1"/>
</dbReference>
<dbReference type="SMART" id="SM01086">
    <property type="entry name" value="ClpB_D2-small"/>
    <property type="match status" value="1"/>
</dbReference>
<dbReference type="SMART" id="SM00994">
    <property type="entry name" value="zf-C4_ClpX"/>
    <property type="match status" value="1"/>
</dbReference>
<dbReference type="SUPFAM" id="SSF57716">
    <property type="entry name" value="Glucocorticoid receptor-like (DNA-binding domain)"/>
    <property type="match status" value="1"/>
</dbReference>
<dbReference type="SUPFAM" id="SSF52540">
    <property type="entry name" value="P-loop containing nucleoside triphosphate hydrolases"/>
    <property type="match status" value="1"/>
</dbReference>
<dbReference type="PROSITE" id="PS51902">
    <property type="entry name" value="CLPX_ZB"/>
    <property type="match status" value="1"/>
</dbReference>
<feature type="chain" id="PRO_0000160465" description="ATP-dependent Clp protease ATP-binding subunit ClpX">
    <location>
        <begin position="1"/>
        <end position="423"/>
    </location>
</feature>
<feature type="domain" description="ClpX-type ZB" evidence="2">
    <location>
        <begin position="2"/>
        <end position="56"/>
    </location>
</feature>
<feature type="binding site" evidence="2">
    <location>
        <position position="15"/>
    </location>
    <ligand>
        <name>Zn(2+)</name>
        <dbReference type="ChEBI" id="CHEBI:29105"/>
    </ligand>
</feature>
<feature type="binding site" evidence="2">
    <location>
        <position position="18"/>
    </location>
    <ligand>
        <name>Zn(2+)</name>
        <dbReference type="ChEBI" id="CHEBI:29105"/>
    </ligand>
</feature>
<feature type="binding site" evidence="2">
    <location>
        <position position="37"/>
    </location>
    <ligand>
        <name>Zn(2+)</name>
        <dbReference type="ChEBI" id="CHEBI:29105"/>
    </ligand>
</feature>
<feature type="binding site" evidence="2">
    <location>
        <position position="40"/>
    </location>
    <ligand>
        <name>Zn(2+)</name>
        <dbReference type="ChEBI" id="CHEBI:29105"/>
    </ligand>
</feature>
<feature type="binding site" evidence="1">
    <location>
        <begin position="120"/>
        <end position="127"/>
    </location>
    <ligand>
        <name>ATP</name>
        <dbReference type="ChEBI" id="CHEBI:30616"/>
    </ligand>
</feature>
<reference key="1">
    <citation type="journal article" date="2004" name="Proc. Natl. Acad. Sci. U.S.A.">
        <title>Insights into the evolution of Yersinia pestis through whole-genome comparison with Yersinia pseudotuberculosis.</title>
        <authorList>
            <person name="Chain P.S.G."/>
            <person name="Carniel E."/>
            <person name="Larimer F.W."/>
            <person name="Lamerdin J."/>
            <person name="Stoutland P.O."/>
            <person name="Regala W.M."/>
            <person name="Georgescu A.M."/>
            <person name="Vergez L.M."/>
            <person name="Land M.L."/>
            <person name="Motin V.L."/>
            <person name="Brubaker R.R."/>
            <person name="Fowler J."/>
            <person name="Hinnebusch J."/>
            <person name="Marceau M."/>
            <person name="Medigue C."/>
            <person name="Simonet M."/>
            <person name="Chenal-Francisque V."/>
            <person name="Souza B."/>
            <person name="Dacheux D."/>
            <person name="Elliott J.M."/>
            <person name="Derbise A."/>
            <person name="Hauser L.J."/>
            <person name="Garcia E."/>
        </authorList>
    </citation>
    <scope>NUCLEOTIDE SEQUENCE [LARGE SCALE GENOMIC DNA]</scope>
    <source>
        <strain>IP32953</strain>
    </source>
</reference>
<evidence type="ECO:0000255" key="1">
    <source>
        <dbReference type="HAMAP-Rule" id="MF_00175"/>
    </source>
</evidence>
<evidence type="ECO:0000255" key="2">
    <source>
        <dbReference type="PROSITE-ProRule" id="PRU01250"/>
    </source>
</evidence>
<proteinExistence type="inferred from homology"/>
<sequence>MTDKRKDGSGKLLYCSFCGKSQHEVRKLIAGPSVYICDECVDLCNDIIREEIKEVSPHRDRSSLPTPHEIRHHLDDYVIGQEPAKKVLAVAVYNHYKRLRNGDTSNGIELGKSNILLIGPTGSGKTLLAETLARLLDVPFTMADATTLTEAGYVGEDVENIIQKLLQKCDYDVQKAQRGIVYIDEIDKISRKSDNPSITRDVSGEGVQQALLKLIEGTIAAVPPQGGRKHPQQEFLQVDTSKILFICGGAFAGLDKVIGQRINTGSGIGFGAVVKGQSEKATEGELLSQVEPEDLIKFGLIPEFIGRLPVVATLSELSEDALIQILKEPKNALTKQYQALFSLEGVELEFRDEALTAIAKKAMARKTGARGLRSIVEGVLLDTMYDLPSMDSVEKVVVDESVIAGQSAPMLIYGQPEAQASGE</sequence>